<protein>
    <recommendedName>
        <fullName evidence="1">Virginiamycin B lyase</fullName>
        <ecNumber evidence="1">4.2.99.-</ecNumber>
    </recommendedName>
    <alternativeName>
        <fullName evidence="1">Streptogramin B lyase</fullName>
    </alternativeName>
</protein>
<accession>A0R1Y1</accession>
<accession>I7FIN4</accession>
<proteinExistence type="inferred from homology"/>
<keyword id="KW-0046">Antibiotic resistance</keyword>
<keyword id="KW-0456">Lyase</keyword>
<keyword id="KW-0460">Magnesium</keyword>
<keyword id="KW-0479">Metal-binding</keyword>
<keyword id="KW-1185">Reference proteome</keyword>
<comment type="function">
    <text evidence="1">Inactivates the type B streptogramin antibiotics by linearizing the lactone ring at the ester linkage, generating a free phenylglycine carboxylate and converting the threonyl moiety into 2-amino-butenoic acid.</text>
</comment>
<comment type="cofactor">
    <cofactor evidence="1">
        <name>Mg(2+)</name>
        <dbReference type="ChEBI" id="CHEBI:18420"/>
    </cofactor>
</comment>
<comment type="subunit">
    <text evidence="1">Monomer.</text>
</comment>
<comment type="similarity">
    <text evidence="1">Belongs to the Vgb family.</text>
</comment>
<organism>
    <name type="scientific">Mycolicibacterium smegmatis (strain ATCC 700084 / mc(2)155)</name>
    <name type="common">Mycobacterium smegmatis</name>
    <dbReference type="NCBI Taxonomy" id="246196"/>
    <lineage>
        <taxon>Bacteria</taxon>
        <taxon>Bacillati</taxon>
        <taxon>Actinomycetota</taxon>
        <taxon>Actinomycetes</taxon>
        <taxon>Mycobacteriales</taxon>
        <taxon>Mycobacteriaceae</taxon>
        <taxon>Mycolicibacterium</taxon>
    </lineage>
</organism>
<name>VGB_MYCS2</name>
<sequence>MSKALKVGLDGGPYALAAGPDGAMWVTLAHSGEIARVTETGEVAVYPVAPQARPSIIAAGPDGAMWFTRAGDDRIGRITVDGELAEFELAEGSAPFGIAAGPDDALWFTAMTSGEVCRISTDGEVTSVAVVGGMPSMITAGPDGAMWFTINQGNAIGRLETDGTLTVRELPTPAAGPVGITATHDDAVWFTEIGADQLGRIPLDEAIQELELPGKPHAVVADPDDGVWVSLWGADQLARVSGDGEVVTIDLPSGSEPHGLAIGPDGAAWVALECGFVLRMPN</sequence>
<feature type="chain" id="PRO_0000313771" description="Virginiamycin B lyase">
    <location>
        <begin position="1"/>
        <end position="282"/>
    </location>
</feature>
<feature type="active site" description="Proton acceptor" evidence="1">
    <location>
        <position position="258"/>
    </location>
</feature>
<feature type="binding site" evidence="1">
    <location>
        <position position="217"/>
    </location>
    <ligand>
        <name>substrate</name>
    </ligand>
</feature>
<feature type="binding site" evidence="1">
    <location>
        <position position="256"/>
    </location>
    <ligand>
        <name>Mg(2+)</name>
        <dbReference type="ChEBI" id="CHEBI:18420"/>
    </ligand>
</feature>
<feature type="binding site" evidence="1">
    <location>
        <position position="273"/>
    </location>
    <ligand>
        <name>Mg(2+)</name>
        <dbReference type="ChEBI" id="CHEBI:18420"/>
    </ligand>
</feature>
<dbReference type="EC" id="4.2.99.-" evidence="1"/>
<dbReference type="EMBL" id="CP000480">
    <property type="protein sequence ID" value="ABK70629.1"/>
    <property type="molecule type" value="Genomic_DNA"/>
</dbReference>
<dbReference type="EMBL" id="CP001663">
    <property type="protein sequence ID" value="AFP41235.1"/>
    <property type="molecule type" value="Genomic_DNA"/>
</dbReference>
<dbReference type="RefSeq" id="YP_889169.1">
    <property type="nucleotide sequence ID" value="NC_008596.1"/>
</dbReference>
<dbReference type="SMR" id="A0R1Y1"/>
<dbReference type="STRING" id="246196.MSMEG_4914"/>
<dbReference type="PaxDb" id="246196-MSMEI_4787"/>
<dbReference type="KEGG" id="msb:LJ00_24300"/>
<dbReference type="KEGG" id="msg:MSMEI_4787"/>
<dbReference type="KEGG" id="msm:MSMEG_4914"/>
<dbReference type="PATRIC" id="fig|246196.19.peg.4795"/>
<dbReference type="eggNOG" id="COG4257">
    <property type="taxonomic scope" value="Bacteria"/>
</dbReference>
<dbReference type="OrthoDB" id="9812926at2"/>
<dbReference type="Proteomes" id="UP000000757">
    <property type="component" value="Chromosome"/>
</dbReference>
<dbReference type="Proteomes" id="UP000006158">
    <property type="component" value="Chromosome"/>
</dbReference>
<dbReference type="GO" id="GO:0030288">
    <property type="term" value="C:outer membrane-bounded periplasmic space"/>
    <property type="evidence" value="ECO:0007669"/>
    <property type="project" value="TreeGrafter"/>
</dbReference>
<dbReference type="GO" id="GO:0016835">
    <property type="term" value="F:carbon-oxygen lyase activity"/>
    <property type="evidence" value="ECO:0007669"/>
    <property type="project" value="UniProtKB-UniRule"/>
</dbReference>
<dbReference type="GO" id="GO:0000287">
    <property type="term" value="F:magnesium ion binding"/>
    <property type="evidence" value="ECO:0007669"/>
    <property type="project" value="InterPro"/>
</dbReference>
<dbReference type="GO" id="GO:0017001">
    <property type="term" value="P:antibiotic catabolic process"/>
    <property type="evidence" value="ECO:0007669"/>
    <property type="project" value="UniProtKB-UniRule"/>
</dbReference>
<dbReference type="GO" id="GO:0046677">
    <property type="term" value="P:response to antibiotic"/>
    <property type="evidence" value="ECO:0007669"/>
    <property type="project" value="UniProtKB-KW"/>
</dbReference>
<dbReference type="Gene3D" id="2.130.10.10">
    <property type="entry name" value="YVTN repeat-like/Quinoprotein amine dehydrogenase"/>
    <property type="match status" value="1"/>
</dbReference>
<dbReference type="HAMAP" id="MF_01282">
    <property type="entry name" value="VirginiamycinB_lyase"/>
    <property type="match status" value="1"/>
</dbReference>
<dbReference type="InterPro" id="IPR011217">
    <property type="entry name" value="Streptogrm_lyase"/>
</dbReference>
<dbReference type="InterPro" id="IPR051344">
    <property type="entry name" value="Vgb"/>
</dbReference>
<dbReference type="InterPro" id="IPR015943">
    <property type="entry name" value="WD40/YVTN_repeat-like_dom_sf"/>
</dbReference>
<dbReference type="PANTHER" id="PTHR40274">
    <property type="entry name" value="VIRGINIAMYCIN B LYASE"/>
    <property type="match status" value="1"/>
</dbReference>
<dbReference type="PANTHER" id="PTHR40274:SF3">
    <property type="entry name" value="VIRGINIAMYCIN B LYASE"/>
    <property type="match status" value="1"/>
</dbReference>
<dbReference type="Pfam" id="PF24684">
    <property type="entry name" value="Vgb_lyase"/>
    <property type="match status" value="1"/>
</dbReference>
<dbReference type="SUPFAM" id="SSF63829">
    <property type="entry name" value="Calcium-dependent phosphotriesterase"/>
    <property type="match status" value="1"/>
</dbReference>
<evidence type="ECO:0000255" key="1">
    <source>
        <dbReference type="HAMAP-Rule" id="MF_01282"/>
    </source>
</evidence>
<reference key="1">
    <citation type="submission" date="2006-10" db="EMBL/GenBank/DDBJ databases">
        <authorList>
            <person name="Fleischmann R.D."/>
            <person name="Dodson R.J."/>
            <person name="Haft D.H."/>
            <person name="Merkel J.S."/>
            <person name="Nelson W.C."/>
            <person name="Fraser C.M."/>
        </authorList>
    </citation>
    <scope>NUCLEOTIDE SEQUENCE [LARGE SCALE GENOMIC DNA]</scope>
    <source>
        <strain>ATCC 700084 / mc(2)155</strain>
    </source>
</reference>
<reference key="2">
    <citation type="journal article" date="2007" name="Genome Biol.">
        <title>Interrupted coding sequences in Mycobacterium smegmatis: authentic mutations or sequencing errors?</title>
        <authorList>
            <person name="Deshayes C."/>
            <person name="Perrodou E."/>
            <person name="Gallien S."/>
            <person name="Euphrasie D."/>
            <person name="Schaeffer C."/>
            <person name="Van-Dorsselaer A."/>
            <person name="Poch O."/>
            <person name="Lecompte O."/>
            <person name="Reyrat J.-M."/>
        </authorList>
    </citation>
    <scope>NUCLEOTIDE SEQUENCE [LARGE SCALE GENOMIC DNA]</scope>
    <source>
        <strain>ATCC 700084 / mc(2)155</strain>
    </source>
</reference>
<reference key="3">
    <citation type="journal article" date="2009" name="Genome Res.">
        <title>Ortho-proteogenomics: multiple proteomes investigation through orthology and a new MS-based protocol.</title>
        <authorList>
            <person name="Gallien S."/>
            <person name="Perrodou E."/>
            <person name="Carapito C."/>
            <person name="Deshayes C."/>
            <person name="Reyrat J.-M."/>
            <person name="Van Dorsselaer A."/>
            <person name="Poch O."/>
            <person name="Schaeffer C."/>
            <person name="Lecompte O."/>
        </authorList>
    </citation>
    <scope>NUCLEOTIDE SEQUENCE [LARGE SCALE GENOMIC DNA]</scope>
    <source>
        <strain>ATCC 700084 / mc(2)155</strain>
    </source>
</reference>
<gene>
    <name evidence="1" type="primary">vgb</name>
    <name type="ordered locus">MSMEG_4914</name>
    <name type="ordered locus">MSMEI_4787</name>
</gene>